<organism>
    <name type="scientific">Homo sapiens</name>
    <name type="common">Human</name>
    <dbReference type="NCBI Taxonomy" id="9606"/>
    <lineage>
        <taxon>Eukaryota</taxon>
        <taxon>Metazoa</taxon>
        <taxon>Chordata</taxon>
        <taxon>Craniata</taxon>
        <taxon>Vertebrata</taxon>
        <taxon>Euteleostomi</taxon>
        <taxon>Mammalia</taxon>
        <taxon>Eutheria</taxon>
        <taxon>Euarchontoglires</taxon>
        <taxon>Primates</taxon>
        <taxon>Haplorrhini</taxon>
        <taxon>Catarrhini</taxon>
        <taxon>Hominidae</taxon>
        <taxon>Homo</taxon>
    </lineage>
</organism>
<protein>
    <recommendedName>
        <fullName evidence="20 21">Calcium-independent phospholipase A2-gamma</fullName>
        <ecNumber evidence="6 7 9 10 11 12">3.1.1.-</ecNumber>
        <ecNumber evidence="10">3.1.1.5</ecNumber>
    </recommendedName>
    <alternativeName>
        <fullName evidence="15">Intracellular membrane-associated calcium-independent phospholipase A2 gamma</fullName>
        <shortName evidence="15">iPLA2-gamma</shortName>
    </alternativeName>
    <alternativeName>
        <fullName>PNPLA-gamma</fullName>
    </alternativeName>
    <alternativeName>
        <fullName evidence="25">Patatin-like phospholipase domain-containing protein 8</fullName>
    </alternativeName>
    <alternativeName>
        <fullName>iPLA2-2</fullName>
    </alternativeName>
</protein>
<comment type="function">
    <text evidence="2 6 7 9 10 11 12 14">Calcium-independent and membrane-bound phospholipase, that catalyzes the esterolytic cleavage of fatty acids from glycerophospholipids to yield free fatty acids and lysophospholipids, hence regulating membrane physical properties and the release of lipid second messengers and growth factors (PubMed:10744668, PubMed:10833412, PubMed:15695510, PubMed:15908428, PubMed:17213206, PubMed:18171998, PubMed:28442572). Hydrolyzes phosphatidylethanolamine, phosphatidylcholine and probably phosphatidylinositol with a possible preference for the former (PubMed:15695510). Also has a broad substrate specificity in terms of fatty acid moieties, hydrolyzing saturated and mono-unsaturated fatty acids at nearly equal rates from either the sn-1 or sn-2 position in diacyl phosphatidylcholine (PubMed:10744668, PubMed:10833412, PubMed:15695510, PubMed:15908428). However, has a weak activity toward polyunsaturated fatty acids at the sn-2 position, and thereby favors the production of 2-arachidonoyl lysophosphatidylcholine, a key branch point metabolite in eicosanoid signaling (PubMed:15908428). On the other hand, can produce arachidonic acid from the sn-1 position of diacyl phospholipid and from the sn-2 position of arachidonate-containing plasmalogen substrates (PubMed:15908428). Therefore, plays an important role in the mobilization of arachidonic acid in response to cellular stimuli and the generation of lipid second messengers (PubMed:15695510, PubMed:15908428). Can also hydrolyze lysophosphatidylcholine (PubMed:15695510). In the mitochondrial compartment, catalyzes the hydrolysis and release of oxidized aliphatic chains from cardiolipin and integrates mitochondrial bioenergetics and signaling. It is essential for maintaining efficient bioenergetic mitochondrial function through tailoring mitochondrial membrane lipid metabolism and composition (PubMed:28442572).</text>
</comment>
<comment type="catalytic activity">
    <reaction evidence="6 7 9 10 11 14">
        <text>a 1,2-diacyl-sn-glycero-3-phosphocholine + H2O = a 1-acyl-sn-glycero-3-phosphocholine + a fatty acid + H(+)</text>
        <dbReference type="Rhea" id="RHEA:15801"/>
        <dbReference type="ChEBI" id="CHEBI:15377"/>
        <dbReference type="ChEBI" id="CHEBI:15378"/>
        <dbReference type="ChEBI" id="CHEBI:28868"/>
        <dbReference type="ChEBI" id="CHEBI:57643"/>
        <dbReference type="ChEBI" id="CHEBI:58168"/>
    </reaction>
    <physiologicalReaction direction="left-to-right" evidence="21">
        <dbReference type="Rhea" id="RHEA:15802"/>
    </physiologicalReaction>
</comment>
<comment type="catalytic activity">
    <reaction evidence="10">
        <text>a 1,2-diacyl-sn-glycero-3-phosphocholine + H2O = a 2-acyl-sn-glycero-3-phosphocholine + a fatty acid + H(+)</text>
        <dbReference type="Rhea" id="RHEA:18689"/>
        <dbReference type="ChEBI" id="CHEBI:15377"/>
        <dbReference type="ChEBI" id="CHEBI:15378"/>
        <dbReference type="ChEBI" id="CHEBI:28868"/>
        <dbReference type="ChEBI" id="CHEBI:57643"/>
        <dbReference type="ChEBI" id="CHEBI:57875"/>
    </reaction>
    <physiologicalReaction direction="left-to-right" evidence="21">
        <dbReference type="Rhea" id="RHEA:18690"/>
    </physiologicalReaction>
</comment>
<comment type="catalytic activity">
    <reaction evidence="9 12">
        <text>a 1,2-diacyl-sn-glycero-3-phosphoethanolamine + H2O = a 1-acyl-sn-glycero-3-phosphoethanolamine + a fatty acid + H(+)</text>
        <dbReference type="Rhea" id="RHEA:44604"/>
        <dbReference type="ChEBI" id="CHEBI:15377"/>
        <dbReference type="ChEBI" id="CHEBI:15378"/>
        <dbReference type="ChEBI" id="CHEBI:28868"/>
        <dbReference type="ChEBI" id="CHEBI:64381"/>
        <dbReference type="ChEBI" id="CHEBI:64612"/>
    </reaction>
    <physiologicalReaction direction="left-to-right" evidence="20">
        <dbReference type="Rhea" id="RHEA:44605"/>
    </physiologicalReaction>
</comment>
<comment type="catalytic activity">
    <reaction evidence="14">
        <text>a 1-O-(1Z-alkenyl)-2-acyl-sn-glycero-3-phosphocholine + H2O = a 1-O-(1Z-alkenyl)-sn-glycero-3-phosphocholine + a fatty acid + H(+)</text>
        <dbReference type="Rhea" id="RHEA:44068"/>
        <dbReference type="ChEBI" id="CHEBI:15377"/>
        <dbReference type="ChEBI" id="CHEBI:15378"/>
        <dbReference type="ChEBI" id="CHEBI:28868"/>
        <dbReference type="ChEBI" id="CHEBI:77286"/>
        <dbReference type="ChEBI" id="CHEBI:77287"/>
    </reaction>
    <physiologicalReaction direction="left-to-right" evidence="24">
        <dbReference type="Rhea" id="RHEA:44069"/>
    </physiologicalReaction>
</comment>
<comment type="catalytic activity">
    <reaction evidence="10">
        <text>a 1-acyl-sn-glycero-3-phosphocholine + H2O = sn-glycerol 3-phosphocholine + a fatty acid + H(+)</text>
        <dbReference type="Rhea" id="RHEA:15177"/>
        <dbReference type="ChEBI" id="CHEBI:15377"/>
        <dbReference type="ChEBI" id="CHEBI:15378"/>
        <dbReference type="ChEBI" id="CHEBI:16870"/>
        <dbReference type="ChEBI" id="CHEBI:28868"/>
        <dbReference type="ChEBI" id="CHEBI:58168"/>
        <dbReference type="EC" id="3.1.1.5"/>
    </reaction>
    <physiologicalReaction direction="left-to-right" evidence="21">
        <dbReference type="Rhea" id="RHEA:15178"/>
    </physiologicalReaction>
</comment>
<comment type="catalytic activity">
    <reaction evidence="9">
        <text>1-acyl-2-(9Z,12Z)-octadecadienoyl-sn-glycero-3-phosphocholine + H2O = a 1-acyl-sn-glycero-3-phosphocholine + (9Z,12Z)-octadecadienoate + H(+)</text>
        <dbReference type="Rhea" id="RHEA:40643"/>
        <dbReference type="ChEBI" id="CHEBI:15377"/>
        <dbReference type="ChEBI" id="CHEBI:15378"/>
        <dbReference type="ChEBI" id="CHEBI:30245"/>
        <dbReference type="ChEBI" id="CHEBI:58168"/>
        <dbReference type="ChEBI" id="CHEBI:60000"/>
    </reaction>
    <physiologicalReaction direction="left-to-right" evidence="20">
        <dbReference type="Rhea" id="RHEA:40644"/>
    </physiologicalReaction>
</comment>
<comment type="catalytic activity">
    <reaction evidence="9">
        <text>1-acyl-2-(5Z,8Z,11Z,14Z-eicosatetraenoyl)-sn-glycero-3-phosphocholine + H2O = a 1-acyl-sn-glycero-3-phosphocholine + (5Z,8Z,11Z,14Z)-eicosatetraenoate + H(+)</text>
        <dbReference type="Rhea" id="RHEA:40651"/>
        <dbReference type="ChEBI" id="CHEBI:15377"/>
        <dbReference type="ChEBI" id="CHEBI:15378"/>
        <dbReference type="ChEBI" id="CHEBI:32395"/>
        <dbReference type="ChEBI" id="CHEBI:58168"/>
        <dbReference type="ChEBI" id="CHEBI:75063"/>
    </reaction>
    <physiologicalReaction direction="left-to-right" evidence="20">
        <dbReference type="Rhea" id="RHEA:40652"/>
    </physiologicalReaction>
</comment>
<comment type="catalytic activity">
    <reaction evidence="6 14">
        <text>1-hexadecanoyl-2-(5Z,8Z,11Z,14Z-eicosatetraenoyl)-sn-glycero-3-phosphocholine + H2O = 1-hexadecanoyl-sn-glycero-3-phosphocholine + (5Z,8Z,11Z,14Z)-eicosatetraenoate + H(+)</text>
        <dbReference type="Rhea" id="RHEA:40427"/>
        <dbReference type="ChEBI" id="CHEBI:15377"/>
        <dbReference type="ChEBI" id="CHEBI:15378"/>
        <dbReference type="ChEBI" id="CHEBI:32395"/>
        <dbReference type="ChEBI" id="CHEBI:72998"/>
        <dbReference type="ChEBI" id="CHEBI:73003"/>
    </reaction>
    <physiologicalReaction direction="left-to-right" evidence="24">
        <dbReference type="Rhea" id="RHEA:40428"/>
    </physiologicalReaction>
</comment>
<comment type="catalytic activity">
    <reaction evidence="10">
        <text>1-octadecanoyl-2-(9Z-octadecenoyl)-sn-glycero-3-phosphocholine + H2O = 1-octadecanoyl-sn-glycero-3-phosphocholine + (9Z)-octadecenoate + H(+)</text>
        <dbReference type="Rhea" id="RHEA:40819"/>
        <dbReference type="ChEBI" id="CHEBI:15377"/>
        <dbReference type="ChEBI" id="CHEBI:15378"/>
        <dbReference type="ChEBI" id="CHEBI:30823"/>
        <dbReference type="ChEBI" id="CHEBI:73858"/>
        <dbReference type="ChEBI" id="CHEBI:75034"/>
    </reaction>
    <physiologicalReaction direction="left-to-right" evidence="21">
        <dbReference type="Rhea" id="RHEA:40820"/>
    </physiologicalReaction>
</comment>
<comment type="catalytic activity">
    <reaction evidence="6 10 11">
        <text>1-hexadecanoyl-2-(9Z-octadecenoyl)-sn-glycero-3-phosphocholine + H2O = 1-hexadecanoyl-sn-glycero-3-phosphocholine + (9Z)-octadecenoate + H(+)</text>
        <dbReference type="Rhea" id="RHEA:38779"/>
        <dbReference type="ChEBI" id="CHEBI:15377"/>
        <dbReference type="ChEBI" id="CHEBI:15378"/>
        <dbReference type="ChEBI" id="CHEBI:30823"/>
        <dbReference type="ChEBI" id="CHEBI:72998"/>
        <dbReference type="ChEBI" id="CHEBI:73001"/>
    </reaction>
    <physiologicalReaction direction="left-to-right" evidence="22">
        <dbReference type="Rhea" id="RHEA:38780"/>
    </physiologicalReaction>
</comment>
<comment type="catalytic activity">
    <reaction evidence="6">
        <text>1-hexadecanoyl-2-(9Z,12Z-octadecadienoyl)-sn-glycero-3-phosphocholine + H2O = (9Z,12Z)-octadecadienoate + 1-hexadecanoyl-sn-glycero-3-phosphocholine + H(+)</text>
        <dbReference type="Rhea" id="RHEA:40811"/>
        <dbReference type="ChEBI" id="CHEBI:15377"/>
        <dbReference type="ChEBI" id="CHEBI:15378"/>
        <dbReference type="ChEBI" id="CHEBI:30245"/>
        <dbReference type="ChEBI" id="CHEBI:72998"/>
        <dbReference type="ChEBI" id="CHEBI:73002"/>
    </reaction>
    <physiologicalReaction direction="left-to-right" evidence="18">
        <dbReference type="Rhea" id="RHEA:40812"/>
    </physiologicalReaction>
</comment>
<comment type="catalytic activity">
    <reaction evidence="9">
        <text>1-acyl-2-(9Z,12Z)-octadecadienoyl-sn-glycero-3-phosphoethanolamine + H2O = a 1-acyl-sn-glycero-3-phosphoethanolamine + (9Z,12Z)-octadecadienoate + H(+)</text>
        <dbReference type="Rhea" id="RHEA:40639"/>
        <dbReference type="ChEBI" id="CHEBI:15377"/>
        <dbReference type="ChEBI" id="CHEBI:15378"/>
        <dbReference type="ChEBI" id="CHEBI:30245"/>
        <dbReference type="ChEBI" id="CHEBI:64381"/>
        <dbReference type="ChEBI" id="CHEBI:75069"/>
    </reaction>
    <physiologicalReaction direction="left-to-right" evidence="20">
        <dbReference type="Rhea" id="RHEA:40640"/>
    </physiologicalReaction>
</comment>
<comment type="catalytic activity">
    <reaction evidence="9 12">
        <text>1-acyl-2-(5Z,8Z,11Z,14Z)-eicosatetraenoyl-sn-glycero-3-phosphoethanolamine + H2O = a 1-acyl-sn-glycero-3-phosphoethanolamine + (5Z,8Z,11Z,14Z)-eicosatetraenoate + H(+)</text>
        <dbReference type="Rhea" id="RHEA:40647"/>
        <dbReference type="ChEBI" id="CHEBI:15377"/>
        <dbReference type="ChEBI" id="CHEBI:15378"/>
        <dbReference type="ChEBI" id="CHEBI:32395"/>
        <dbReference type="ChEBI" id="CHEBI:64381"/>
        <dbReference type="ChEBI" id="CHEBI:75067"/>
    </reaction>
    <physiologicalReaction direction="left-to-right" evidence="20">
        <dbReference type="Rhea" id="RHEA:40648"/>
    </physiologicalReaction>
</comment>
<comment type="catalytic activity">
    <reaction evidence="12">
        <text>1-hexadecanoyl-2-(5Z,8Z,11Z,14Z-eicosatetraenoyl)-sn-glycero-3-phosphoethanolamine + H2O = 1-hexadecanoyl-sn-glycero-3-phosphoethanolamine + (5Z,8Z,11Z,14Z)-eicosatetraenoate + H(+)</text>
        <dbReference type="Rhea" id="RHEA:40431"/>
        <dbReference type="ChEBI" id="CHEBI:15377"/>
        <dbReference type="ChEBI" id="CHEBI:15378"/>
        <dbReference type="ChEBI" id="CHEBI:32395"/>
        <dbReference type="ChEBI" id="CHEBI:73004"/>
        <dbReference type="ChEBI" id="CHEBI:73009"/>
    </reaction>
    <physiologicalReaction direction="left-to-right" evidence="23">
        <dbReference type="Rhea" id="RHEA:40432"/>
    </physiologicalReaction>
</comment>
<comment type="catalytic activity">
    <reaction evidence="10 14">
        <text>1-hexadecanoyl-2-(5Z,8Z,11Z,14Z-eicosatetraenoyl)-sn-glycero-3-phosphocholine + H2O = 2-(5Z,8Z,11Z,14Z)-eicosatetraenoyl-sn-glycero-3-phosphocholine + hexadecanoate + H(+)</text>
        <dbReference type="Rhea" id="RHEA:40571"/>
        <dbReference type="ChEBI" id="CHEBI:7896"/>
        <dbReference type="ChEBI" id="CHEBI:15377"/>
        <dbReference type="ChEBI" id="CHEBI:15378"/>
        <dbReference type="ChEBI" id="CHEBI:73003"/>
        <dbReference type="ChEBI" id="CHEBI:76079"/>
    </reaction>
    <physiologicalReaction direction="left-to-right" evidence="21">
        <dbReference type="Rhea" id="RHEA:40572"/>
    </physiologicalReaction>
</comment>
<comment type="catalytic activity">
    <reaction evidence="10">
        <text>1-octadecanoyl-2-(9Z-octadecenoyl)-sn-glycero-3-phosphocholine + H2O = 2-(9Z-octadecenoyl)-sn-glycero-3-phosphocholine + octadecanoate + H(+)</text>
        <dbReference type="Rhea" id="RHEA:40823"/>
        <dbReference type="ChEBI" id="CHEBI:15377"/>
        <dbReference type="ChEBI" id="CHEBI:15378"/>
        <dbReference type="ChEBI" id="CHEBI:25629"/>
        <dbReference type="ChEBI" id="CHEBI:75034"/>
        <dbReference type="ChEBI" id="CHEBI:76071"/>
    </reaction>
    <physiologicalReaction direction="left-to-right" evidence="21">
        <dbReference type="Rhea" id="RHEA:40824"/>
    </physiologicalReaction>
</comment>
<comment type="catalytic activity">
    <reaction evidence="10">
        <text>1-hexadecanoyl-2-(4Z,7Z,10Z,13Z,16Z,19Z-docosahexaenoyl)-sn-glycero-3-phosphocholine + H2O = 2-(4Z,7Z,10Z,13Z,16Z,19Z-docosahexaenoyl)-sn-glycero-3-phosphocholine + hexadecanoate + H(+)</text>
        <dbReference type="Rhea" id="RHEA:41063"/>
        <dbReference type="ChEBI" id="CHEBI:7896"/>
        <dbReference type="ChEBI" id="CHEBI:15377"/>
        <dbReference type="ChEBI" id="CHEBI:15378"/>
        <dbReference type="ChEBI" id="CHEBI:74963"/>
        <dbReference type="ChEBI" id="CHEBI:76085"/>
    </reaction>
    <physiologicalReaction direction="left-to-right" evidence="21">
        <dbReference type="Rhea" id="RHEA:41064"/>
    </physiologicalReaction>
</comment>
<comment type="catalytic activity">
    <reaction evidence="10">
        <text>1-O-(1Z)-hexadecenyl-2 (5Z,8Z,11Z,14Z)-eicosatetraenoyl-sn-glycero-3-phosphocholine + H2O = 1-(1Z-hexadecenyl)-sn-glycero-3-phosphocholine + (5Z,8Z,11Z,14Z)-eicosatetraenoate + H(+)</text>
        <dbReference type="Rhea" id="RHEA:40579"/>
        <dbReference type="ChEBI" id="CHEBI:15377"/>
        <dbReference type="ChEBI" id="CHEBI:15378"/>
        <dbReference type="ChEBI" id="CHEBI:32395"/>
        <dbReference type="ChEBI" id="CHEBI:73850"/>
        <dbReference type="ChEBI" id="CHEBI:77292"/>
    </reaction>
    <physiologicalReaction direction="left-to-right" evidence="21">
        <dbReference type="Rhea" id="RHEA:40580"/>
    </physiologicalReaction>
</comment>
<comment type="catalytic activity">
    <reaction evidence="6">
        <text>1-O-(1Z-hexadecenyl)-2-(9Z-octadecenoyl)-sn-glycero-3-phosphocholine + H2O = 1-(1Z-hexadecenyl)-sn-glycero-3-phosphocholine + (9Z)-octadecenoate + H(+)</text>
        <dbReference type="Rhea" id="RHEA:67156"/>
        <dbReference type="ChEBI" id="CHEBI:15377"/>
        <dbReference type="ChEBI" id="CHEBI:15378"/>
        <dbReference type="ChEBI" id="CHEBI:30823"/>
        <dbReference type="ChEBI" id="CHEBI:73850"/>
        <dbReference type="ChEBI" id="CHEBI:86232"/>
    </reaction>
    <physiologicalReaction direction="left-to-right" evidence="18">
        <dbReference type="Rhea" id="RHEA:67157"/>
    </physiologicalReaction>
</comment>
<comment type="catalytic activity">
    <reaction evidence="10">
        <text>1-hexadecanoyl-sn-glycero-3-phosphocholine + H2O = sn-glycerol 3-phosphocholine + hexadecanoate + H(+)</text>
        <dbReference type="Rhea" id="RHEA:40435"/>
        <dbReference type="ChEBI" id="CHEBI:7896"/>
        <dbReference type="ChEBI" id="CHEBI:15377"/>
        <dbReference type="ChEBI" id="CHEBI:15378"/>
        <dbReference type="ChEBI" id="CHEBI:16870"/>
        <dbReference type="ChEBI" id="CHEBI:72998"/>
    </reaction>
    <physiologicalReaction direction="left-to-right" evidence="21">
        <dbReference type="Rhea" id="RHEA:40436"/>
    </physiologicalReaction>
</comment>
<comment type="catalytic activity">
    <reaction evidence="14">
        <text>1',3'-bis-[1,2-di-(9Z,12Z-octadecadienoyl)-sn-glycero-3-phospho]-glycerol + H2O = 1'-[1,2-di-(9Z,12Z-octadecadienoyl)-sn-glycero-3-phospho]-3'-[1-(9Z,12Z-octadecadienoyl)-sn-glycero-3-phospho]-glycerol + (9Z,12Z)-octadecadienoate + H(+)</text>
        <dbReference type="Rhea" id="RHEA:52812"/>
        <dbReference type="ChEBI" id="CHEBI:15377"/>
        <dbReference type="ChEBI" id="CHEBI:15378"/>
        <dbReference type="ChEBI" id="CHEBI:30245"/>
        <dbReference type="ChEBI" id="CHEBI:83580"/>
        <dbReference type="ChEBI" id="CHEBI:83581"/>
    </reaction>
    <physiologicalReaction direction="left-to-right" evidence="24">
        <dbReference type="Rhea" id="RHEA:52813"/>
    </physiologicalReaction>
</comment>
<comment type="catalytic activity">
    <reaction evidence="14">
        <text>1'-[1-acyl-2-(9-hydroxy-(10E,12Z)-octadecadienoyl)-sn-glycero-3-phospho]-3'-[1,2-diacyl-sn-glycero-3-phospho]-glycerol + H2O = 9-hydroxy-(10E,12Z)-octadecadienoate + 1'-[1,2-diacyl-sn-glycero-3-phospho],3'-[1-acyl-sn-glycero-3-phospho]-glycerol + H(+)</text>
        <dbReference type="Rhea" id="RHEA:67272"/>
        <dbReference type="ChEBI" id="CHEBI:15377"/>
        <dbReference type="ChEBI" id="CHEBI:15378"/>
        <dbReference type="ChEBI" id="CHEBI:64743"/>
        <dbReference type="ChEBI" id="CHEBI:133820"/>
        <dbReference type="ChEBI" id="CHEBI:167908"/>
    </reaction>
    <physiologicalReaction direction="left-to-right" evidence="24">
        <dbReference type="Rhea" id="RHEA:67273"/>
    </physiologicalReaction>
</comment>
<comment type="activity regulation">
    <text evidence="6 7 10 12 14">Calcium-independent phospholipase (PubMed:10744668, PubMed:10833412). Inhibited by (E)-6-bromomethylene-3-1-naphthalenyl-2H-tetrahydropyran-2-one (BEL) (PubMed:10744668, PubMed:15908428, PubMed:18171998). The activity toward 1-hexadecanoyl-2-(5Z,8Z,11Z,14Z-eicosatetraenoyl)-sn-glycero-3-phosphocholine is stimulated by cardiolipin (PubMed:28442572).</text>
</comment>
<comment type="biophysicochemical properties">
    <phDependence>
        <text evidence="18">Optimum pH is 8.0.</text>
    </phDependence>
</comment>
<comment type="pathway">
    <text evidence="21">Phospholipid metabolism.</text>
</comment>
<comment type="subcellular location">
    <subcellularLocation>
        <location evidence="1">Endoplasmic reticulum membrane</location>
        <topology evidence="18 19">Single-pass membrane protein</topology>
    </subcellularLocation>
    <subcellularLocation>
        <location evidence="22">Mitochondrion membrane</location>
        <topology evidence="18 19">Single-pass membrane protein</topology>
    </subcellularLocation>
    <subcellularLocation>
        <location evidence="9">Peroxisome membrane</location>
        <topology evidence="18 19">Single-pass membrane protein</topology>
    </subcellularLocation>
</comment>
<comment type="alternative products">
    <event type="alternative splicing"/>
    <isoform>
        <id>Q9NP80-1</id>
        <name>1</name>
        <sequence type="displayed"/>
    </isoform>
    <isoform>
        <id>Q9NP80-2</id>
        <name>2</name>
        <sequence type="described" ref="VSP_028005"/>
    </isoform>
    <isoform>
        <id>Q9NP80-3</id>
        <name>3</name>
        <sequence type="described" ref="VSP_045594"/>
    </isoform>
</comment>
<comment type="tissue specificity">
    <text evidence="6 7 8 9 10">Expressed in parenchymal tissues including heart, skeletal muscle, placenta, brain, liver and pancreas. Also expressed in bronchial epithelial cells and kidney. Highest expression is observed in skeletal muscle and heart.</text>
</comment>
<comment type="disease" evidence="13">
    <disease id="DI-04438">
        <name>Mitochondrial myopathy with lactic acidosis</name>
        <acronym>MMLA</acronym>
        <description>An autosomal recessive disorder characterized by progressive muscle weakness, hypotonia, seizures, poor weight gain, lactic acidosis, and elevated serum pyruvate concentration. Some patients manifest growth failure and moderate neural deafness.</description>
        <dbReference type="MIM" id="251950"/>
    </disease>
    <text>The disease is caused by variants affecting the gene represented in this entry.</text>
</comment>
<comment type="sequence caution" evidence="17">
    <conflict type="erroneous initiation">
        <sequence resource="EMBL-CDS" id="AAF67630"/>
    </conflict>
    <text>Truncated N-terminus.</text>
</comment>
<comment type="sequence caution" evidence="17">
    <conflict type="erroneous initiation">
        <sequence resource="EMBL-CDS" id="BAA92090"/>
    </conflict>
    <text>Truncated N-terminus.</text>
</comment>
<comment type="sequence caution" evidence="17">
    <conflict type="erroneous gene model prediction">
        <sequence resource="EMBL-CDS" id="EAL24384"/>
    </conflict>
</comment>
<feature type="chain" id="PRO_0000303214" description="Calcium-independent phospholipase A2-gamma">
    <location>
        <begin position="1"/>
        <end position="782"/>
    </location>
</feature>
<feature type="transmembrane region" description="Helical" evidence="3">
    <location>
        <begin position="475"/>
        <end position="495"/>
    </location>
</feature>
<feature type="domain" description="PNPLA" evidence="4">
    <location>
        <begin position="445"/>
        <end position="640"/>
    </location>
</feature>
<feature type="region of interest" description="Disordered" evidence="5">
    <location>
        <begin position="219"/>
        <end position="275"/>
    </location>
</feature>
<feature type="region of interest" description="Disordered" evidence="5">
    <location>
        <begin position="317"/>
        <end position="343"/>
    </location>
</feature>
<feature type="short sequence motif" description="GXGXXG" evidence="4">
    <location>
        <begin position="449"/>
        <end position="454"/>
    </location>
</feature>
<feature type="short sequence motif" description="GXSXG" evidence="4">
    <location>
        <begin position="481"/>
        <end position="485"/>
    </location>
</feature>
<feature type="short sequence motif" description="DGA/G" evidence="4">
    <location>
        <begin position="627"/>
        <end position="629"/>
    </location>
</feature>
<feature type="compositionally biased region" description="Basic and acidic residues" evidence="5">
    <location>
        <begin position="220"/>
        <end position="248"/>
    </location>
</feature>
<feature type="active site" description="Nucleophile" evidence="4">
    <location>
        <position position="483"/>
    </location>
</feature>
<feature type="active site" description="Proton acceptor" evidence="4">
    <location>
        <position position="627"/>
    </location>
</feature>
<feature type="modified residue" description="N6-succinyllysine" evidence="2">
    <location>
        <position position="736"/>
    </location>
</feature>
<feature type="glycosylation site" description="N-linked (GlcNAc...) asparagine" evidence="3">
    <location>
        <position position="4"/>
    </location>
</feature>
<feature type="glycosylation site" description="N-linked (GlcNAc...) asparagine" evidence="3">
    <location>
        <position position="361"/>
    </location>
</feature>
<feature type="splice variant" id="VSP_045594" description="In isoform 3." evidence="16">
    <location>
        <begin position="1"/>
        <end position="100"/>
    </location>
</feature>
<feature type="splice variant" id="VSP_028005" description="In isoform 2." evidence="16">
    <location>
        <begin position="565"/>
        <end position="626"/>
    </location>
</feature>
<feature type="sequence conflict" description="In Ref. 9; AAF67630." evidence="17" ref="9">
    <original>NRGITP</original>
    <variation>IGGITH</variation>
    <location>
        <begin position="570"/>
        <end position="575"/>
    </location>
</feature>
<feature type="sequence conflict" description="In Ref. 8; BAA92090." evidence="17" ref="8">
    <original>NR</original>
    <variation>GI</variation>
    <location>
        <begin position="570"/>
        <end position="571"/>
    </location>
</feature>
<feature type="sequence conflict" description="In Ref. 8; BAA92090." evidence="17" ref="8">
    <original>N</original>
    <variation>S</variation>
    <location>
        <position position="622"/>
    </location>
</feature>
<feature type="sequence conflict" description="In Ref. 3; BX647865." evidence="17" ref="3">
    <original>D</original>
    <variation>G</variation>
    <location>
        <position position="623"/>
    </location>
</feature>
<accession>Q9NP80</accession>
<accession>A4D0S1</accession>
<accession>C9JZI4</accession>
<accession>O95035</accession>
<accession>Q8N3I3</accession>
<accession>Q9H7T5</accession>
<accession>Q9NR17</accession>
<accession>Q9NUN2</accession>
<accession>Q9NZ79</accession>
<reference key="1">
    <citation type="journal article" date="2000" name="Biochem. Biophys. Res. Commun.">
        <title>A novel intracellular membrane-bound calcium-independent phospholipase A(2).</title>
        <authorList>
            <person name="Tanaka H."/>
            <person name="Takeya R."/>
            <person name="Sumimoto H."/>
        </authorList>
    </citation>
    <scope>NUCLEOTIDE SEQUENCE [MRNA] (ISOFORM 1)</scope>
    <scope>FUNCTION</scope>
    <scope>CATALYTIC ACTIVITY</scope>
    <scope>ACTIVITY REGULATION</scope>
    <scope>TOPOLOGY</scope>
    <scope>TISSUE SPECIFICITY</scope>
</reference>
<reference key="2">
    <citation type="journal article" date="2000" name="J. Biol. Chem.">
        <title>The genomic organization, complete mRNA sequence, cloning, and expression of a novel human intracellular membrane-associated calcium-independent phospholipase A(2).</title>
        <authorList>
            <person name="Mancuso D.J."/>
            <person name="Jenkins C.M."/>
            <person name="Gross R.W."/>
        </authorList>
    </citation>
    <scope>NUCLEOTIDE SEQUENCE [MRNA] (ISOFORM 1)</scope>
    <scope>FUNCTION</scope>
    <scope>CATALYTIC ACTIVITY</scope>
    <scope>BIOPHYSICOCHEMICAL PROPERTIES</scope>
    <scope>ACTIVITY REGULATION</scope>
    <scope>TOPOLOGY</scope>
    <scope>TISSUE SPECIFICITY</scope>
    <source>
        <tissue>Heart</tissue>
    </source>
</reference>
<reference key="3">
    <citation type="journal article" date="2007" name="BMC Genomics">
        <title>The full-ORF clone resource of the German cDNA consortium.</title>
        <authorList>
            <person name="Bechtel S."/>
            <person name="Rosenfelder H."/>
            <person name="Duda A."/>
            <person name="Schmidt C.P."/>
            <person name="Ernst U."/>
            <person name="Wellenreuther R."/>
            <person name="Mehrle A."/>
            <person name="Schuster C."/>
            <person name="Bahr A."/>
            <person name="Bloecker H."/>
            <person name="Heubner D."/>
            <person name="Hoerlein A."/>
            <person name="Michel G."/>
            <person name="Wedler H."/>
            <person name="Koehrer K."/>
            <person name="Ottenwaelder B."/>
            <person name="Poustka A."/>
            <person name="Wiemann S."/>
            <person name="Schupp I."/>
        </authorList>
    </citation>
    <scope>NUCLEOTIDE SEQUENCE [LARGE SCALE MRNA] (ISOFORMS 2 AND 3)</scope>
    <source>
        <tissue>Adipocyte</tissue>
        <tissue>Amygdala</tissue>
    </source>
</reference>
<reference key="4">
    <citation type="journal article" date="2003" name="Nature">
        <title>The DNA sequence of human chromosome 7.</title>
        <authorList>
            <person name="Hillier L.W."/>
            <person name="Fulton R.S."/>
            <person name="Fulton L.A."/>
            <person name="Graves T.A."/>
            <person name="Pepin K.H."/>
            <person name="Wagner-McPherson C."/>
            <person name="Layman D."/>
            <person name="Maas J."/>
            <person name="Jaeger S."/>
            <person name="Walker R."/>
            <person name="Wylie K."/>
            <person name="Sekhon M."/>
            <person name="Becker M.C."/>
            <person name="O'Laughlin M.D."/>
            <person name="Schaller M.E."/>
            <person name="Fewell G.A."/>
            <person name="Delehaunty K.D."/>
            <person name="Miner T.L."/>
            <person name="Nash W.E."/>
            <person name="Cordes M."/>
            <person name="Du H."/>
            <person name="Sun H."/>
            <person name="Edwards J."/>
            <person name="Bradshaw-Cordum H."/>
            <person name="Ali J."/>
            <person name="Andrews S."/>
            <person name="Isak A."/>
            <person name="Vanbrunt A."/>
            <person name="Nguyen C."/>
            <person name="Du F."/>
            <person name="Lamar B."/>
            <person name="Courtney L."/>
            <person name="Kalicki J."/>
            <person name="Ozersky P."/>
            <person name="Bielicki L."/>
            <person name="Scott K."/>
            <person name="Holmes A."/>
            <person name="Harkins R."/>
            <person name="Harris A."/>
            <person name="Strong C.M."/>
            <person name="Hou S."/>
            <person name="Tomlinson C."/>
            <person name="Dauphin-Kohlberg S."/>
            <person name="Kozlowicz-Reilly A."/>
            <person name="Leonard S."/>
            <person name="Rohlfing T."/>
            <person name="Rock S.M."/>
            <person name="Tin-Wollam A.-M."/>
            <person name="Abbott A."/>
            <person name="Minx P."/>
            <person name="Maupin R."/>
            <person name="Strowmatt C."/>
            <person name="Latreille P."/>
            <person name="Miller N."/>
            <person name="Johnson D."/>
            <person name="Murray J."/>
            <person name="Woessner J.P."/>
            <person name="Wendl M.C."/>
            <person name="Yang S.-P."/>
            <person name="Schultz B.R."/>
            <person name="Wallis J.W."/>
            <person name="Spieth J."/>
            <person name="Bieri T.A."/>
            <person name="Nelson J.O."/>
            <person name="Berkowicz N."/>
            <person name="Wohldmann P.E."/>
            <person name="Cook L.L."/>
            <person name="Hickenbotham M.T."/>
            <person name="Eldred J."/>
            <person name="Williams D."/>
            <person name="Bedell J.A."/>
            <person name="Mardis E.R."/>
            <person name="Clifton S.W."/>
            <person name="Chissoe S.L."/>
            <person name="Marra M.A."/>
            <person name="Raymond C."/>
            <person name="Haugen E."/>
            <person name="Gillett W."/>
            <person name="Zhou Y."/>
            <person name="James R."/>
            <person name="Phelps K."/>
            <person name="Iadanoto S."/>
            <person name="Bubb K."/>
            <person name="Simms E."/>
            <person name="Levy R."/>
            <person name="Clendenning J."/>
            <person name="Kaul R."/>
            <person name="Kent W.J."/>
            <person name="Furey T.S."/>
            <person name="Baertsch R.A."/>
            <person name="Brent M.R."/>
            <person name="Keibler E."/>
            <person name="Flicek P."/>
            <person name="Bork P."/>
            <person name="Suyama M."/>
            <person name="Bailey J.A."/>
            <person name="Portnoy M.E."/>
            <person name="Torrents D."/>
            <person name="Chinwalla A.T."/>
            <person name="Gish W.R."/>
            <person name="Eddy S.R."/>
            <person name="McPherson J.D."/>
            <person name="Olson M.V."/>
            <person name="Eichler E.E."/>
            <person name="Green E.D."/>
            <person name="Waterston R.H."/>
            <person name="Wilson R.K."/>
        </authorList>
    </citation>
    <scope>NUCLEOTIDE SEQUENCE [LARGE SCALE GENOMIC DNA]</scope>
</reference>
<reference key="5">
    <citation type="journal article" date="2003" name="Science">
        <title>Human chromosome 7: DNA sequence and biology.</title>
        <authorList>
            <person name="Scherer S.W."/>
            <person name="Cheung J."/>
            <person name="MacDonald J.R."/>
            <person name="Osborne L.R."/>
            <person name="Nakabayashi K."/>
            <person name="Herbrick J.-A."/>
            <person name="Carson A.R."/>
            <person name="Parker-Katiraee L."/>
            <person name="Skaug J."/>
            <person name="Khaja R."/>
            <person name="Zhang J."/>
            <person name="Hudek A.K."/>
            <person name="Li M."/>
            <person name="Haddad M."/>
            <person name="Duggan G.E."/>
            <person name="Fernandez B.A."/>
            <person name="Kanematsu E."/>
            <person name="Gentles S."/>
            <person name="Christopoulos C.C."/>
            <person name="Choufani S."/>
            <person name="Kwasnicka D."/>
            <person name="Zheng X.H."/>
            <person name="Lai Z."/>
            <person name="Nusskern D.R."/>
            <person name="Zhang Q."/>
            <person name="Gu Z."/>
            <person name="Lu F."/>
            <person name="Zeesman S."/>
            <person name="Nowaczyk M.J."/>
            <person name="Teshima I."/>
            <person name="Chitayat D."/>
            <person name="Shuman C."/>
            <person name="Weksberg R."/>
            <person name="Zackai E.H."/>
            <person name="Grebe T.A."/>
            <person name="Cox S.R."/>
            <person name="Kirkpatrick S.J."/>
            <person name="Rahman N."/>
            <person name="Friedman J.M."/>
            <person name="Heng H.H.Q."/>
            <person name="Pelicci P.G."/>
            <person name="Lo-Coco F."/>
            <person name="Belloni E."/>
            <person name="Shaffer L.G."/>
            <person name="Pober B."/>
            <person name="Morton C.C."/>
            <person name="Gusella J.F."/>
            <person name="Bruns G.A.P."/>
            <person name="Korf B.R."/>
            <person name="Quade B.J."/>
            <person name="Ligon A.H."/>
            <person name="Ferguson H."/>
            <person name="Higgins A.W."/>
            <person name="Leach N.T."/>
            <person name="Herrick S.R."/>
            <person name="Lemyre E."/>
            <person name="Farra C.G."/>
            <person name="Kim H.-G."/>
            <person name="Summers A.M."/>
            <person name="Gripp K.W."/>
            <person name="Roberts W."/>
            <person name="Szatmari P."/>
            <person name="Winsor E.J.T."/>
            <person name="Grzeschik K.-H."/>
            <person name="Teebi A."/>
            <person name="Minassian B.A."/>
            <person name="Kere J."/>
            <person name="Armengol L."/>
            <person name="Pujana M.A."/>
            <person name="Estivill X."/>
            <person name="Wilson M.D."/>
            <person name="Koop B.F."/>
            <person name="Tosi S."/>
            <person name="Moore G.E."/>
            <person name="Boright A.P."/>
            <person name="Zlotorynski E."/>
            <person name="Kerem B."/>
            <person name="Kroisel P.M."/>
            <person name="Petek E."/>
            <person name="Oscier D.G."/>
            <person name="Mould S.J."/>
            <person name="Doehner H."/>
            <person name="Doehner K."/>
            <person name="Rommens J.M."/>
            <person name="Vincent J.B."/>
            <person name="Venter J.C."/>
            <person name="Li P.W."/>
            <person name="Mural R.J."/>
            <person name="Adams M.D."/>
            <person name="Tsui L.-C."/>
        </authorList>
    </citation>
    <scope>NUCLEOTIDE SEQUENCE [LARGE SCALE GENOMIC DNA]</scope>
</reference>
<reference key="6">
    <citation type="submission" date="2005-07" db="EMBL/GenBank/DDBJ databases">
        <authorList>
            <person name="Mural R.J."/>
            <person name="Istrail S."/>
            <person name="Sutton G."/>
            <person name="Florea L."/>
            <person name="Halpern A.L."/>
            <person name="Mobarry C.M."/>
            <person name="Lippert R."/>
            <person name="Walenz B."/>
            <person name="Shatkay H."/>
            <person name="Dew I."/>
            <person name="Miller J.R."/>
            <person name="Flanigan M.J."/>
            <person name="Edwards N.J."/>
            <person name="Bolanos R."/>
            <person name="Fasulo D."/>
            <person name="Halldorsson B.V."/>
            <person name="Hannenhalli S."/>
            <person name="Turner R."/>
            <person name="Yooseph S."/>
            <person name="Lu F."/>
            <person name="Nusskern D.R."/>
            <person name="Shue B.C."/>
            <person name="Zheng X.H."/>
            <person name="Zhong F."/>
            <person name="Delcher A.L."/>
            <person name="Huson D.H."/>
            <person name="Kravitz S.A."/>
            <person name="Mouchard L."/>
            <person name="Reinert K."/>
            <person name="Remington K.A."/>
            <person name="Clark A.G."/>
            <person name="Waterman M.S."/>
            <person name="Eichler E.E."/>
            <person name="Adams M.D."/>
            <person name="Hunkapiller M.W."/>
            <person name="Myers E.W."/>
            <person name="Venter J.C."/>
        </authorList>
    </citation>
    <scope>NUCLEOTIDE SEQUENCE [LARGE SCALE GENOMIC DNA]</scope>
</reference>
<reference key="7">
    <citation type="journal article" date="2004" name="Genome Res.">
        <title>The status, quality, and expansion of the NIH full-length cDNA project: the Mammalian Gene Collection (MGC).</title>
        <authorList>
            <consortium name="The MGC Project Team"/>
        </authorList>
    </citation>
    <scope>NUCLEOTIDE SEQUENCE [LARGE SCALE MRNA] (ISOFORM 1)</scope>
    <source>
        <tissue>Testis</tissue>
    </source>
</reference>
<reference key="8">
    <citation type="journal article" date="2004" name="Nat. Genet.">
        <title>Complete sequencing and characterization of 21,243 full-length human cDNAs.</title>
        <authorList>
            <person name="Ota T."/>
            <person name="Suzuki Y."/>
            <person name="Nishikawa T."/>
            <person name="Otsuki T."/>
            <person name="Sugiyama T."/>
            <person name="Irie R."/>
            <person name="Wakamatsu A."/>
            <person name="Hayashi K."/>
            <person name="Sato H."/>
            <person name="Nagai K."/>
            <person name="Kimura K."/>
            <person name="Makita H."/>
            <person name="Sekine M."/>
            <person name="Obayashi M."/>
            <person name="Nishi T."/>
            <person name="Shibahara T."/>
            <person name="Tanaka T."/>
            <person name="Ishii S."/>
            <person name="Yamamoto J."/>
            <person name="Saito K."/>
            <person name="Kawai Y."/>
            <person name="Isono Y."/>
            <person name="Nakamura Y."/>
            <person name="Nagahari K."/>
            <person name="Murakami K."/>
            <person name="Yasuda T."/>
            <person name="Iwayanagi T."/>
            <person name="Wagatsuma M."/>
            <person name="Shiratori A."/>
            <person name="Sudo H."/>
            <person name="Hosoiri T."/>
            <person name="Kaku Y."/>
            <person name="Kodaira H."/>
            <person name="Kondo H."/>
            <person name="Sugawara M."/>
            <person name="Takahashi M."/>
            <person name="Kanda K."/>
            <person name="Yokoi T."/>
            <person name="Furuya T."/>
            <person name="Kikkawa E."/>
            <person name="Omura Y."/>
            <person name="Abe K."/>
            <person name="Kamihara K."/>
            <person name="Katsuta N."/>
            <person name="Sato K."/>
            <person name="Tanikawa M."/>
            <person name="Yamazaki M."/>
            <person name="Ninomiya K."/>
            <person name="Ishibashi T."/>
            <person name="Yamashita H."/>
            <person name="Murakawa K."/>
            <person name="Fujimori K."/>
            <person name="Tanai H."/>
            <person name="Kimata M."/>
            <person name="Watanabe M."/>
            <person name="Hiraoka S."/>
            <person name="Chiba Y."/>
            <person name="Ishida S."/>
            <person name="Ono Y."/>
            <person name="Takiguchi S."/>
            <person name="Watanabe S."/>
            <person name="Yosida M."/>
            <person name="Hotuta T."/>
            <person name="Kusano J."/>
            <person name="Kanehori K."/>
            <person name="Takahashi-Fujii A."/>
            <person name="Hara H."/>
            <person name="Tanase T.-O."/>
            <person name="Nomura Y."/>
            <person name="Togiya S."/>
            <person name="Komai F."/>
            <person name="Hara R."/>
            <person name="Takeuchi K."/>
            <person name="Arita M."/>
            <person name="Imose N."/>
            <person name="Musashino K."/>
            <person name="Yuuki H."/>
            <person name="Oshima A."/>
            <person name="Sasaki N."/>
            <person name="Aotsuka S."/>
            <person name="Yoshikawa Y."/>
            <person name="Matsunawa H."/>
            <person name="Ichihara T."/>
            <person name="Shiohata N."/>
            <person name="Sano S."/>
            <person name="Moriya S."/>
            <person name="Momiyama H."/>
            <person name="Satoh N."/>
            <person name="Takami S."/>
            <person name="Terashima Y."/>
            <person name="Suzuki O."/>
            <person name="Nakagawa S."/>
            <person name="Senoh A."/>
            <person name="Mizoguchi H."/>
            <person name="Goto Y."/>
            <person name="Shimizu F."/>
            <person name="Wakebe H."/>
            <person name="Hishigaki H."/>
            <person name="Watanabe T."/>
            <person name="Sugiyama A."/>
            <person name="Takemoto M."/>
            <person name="Kawakami B."/>
            <person name="Yamazaki M."/>
            <person name="Watanabe K."/>
            <person name="Kumagai A."/>
            <person name="Itakura S."/>
            <person name="Fukuzumi Y."/>
            <person name="Fujimori Y."/>
            <person name="Komiyama M."/>
            <person name="Tashiro H."/>
            <person name="Tanigami A."/>
            <person name="Fujiwara T."/>
            <person name="Ono T."/>
            <person name="Yamada K."/>
            <person name="Fujii Y."/>
            <person name="Ozaki K."/>
            <person name="Hirao M."/>
            <person name="Ohmori Y."/>
            <person name="Kawabata A."/>
            <person name="Hikiji T."/>
            <person name="Kobatake N."/>
            <person name="Inagaki H."/>
            <person name="Ikema Y."/>
            <person name="Okamoto S."/>
            <person name="Okitani R."/>
            <person name="Kawakami T."/>
            <person name="Noguchi S."/>
            <person name="Itoh T."/>
            <person name="Shigeta K."/>
            <person name="Senba T."/>
            <person name="Matsumura K."/>
            <person name="Nakajima Y."/>
            <person name="Mizuno T."/>
            <person name="Morinaga M."/>
            <person name="Sasaki M."/>
            <person name="Togashi T."/>
            <person name="Oyama M."/>
            <person name="Hata H."/>
            <person name="Watanabe M."/>
            <person name="Komatsu T."/>
            <person name="Mizushima-Sugano J."/>
            <person name="Satoh T."/>
            <person name="Shirai Y."/>
            <person name="Takahashi Y."/>
            <person name="Nakagawa K."/>
            <person name="Okumura K."/>
            <person name="Nagase T."/>
            <person name="Nomura N."/>
            <person name="Kikuchi H."/>
            <person name="Masuho Y."/>
            <person name="Yamashita R."/>
            <person name="Nakai K."/>
            <person name="Yada T."/>
            <person name="Nakamura Y."/>
            <person name="Ohara O."/>
            <person name="Isogai T."/>
            <person name="Sugano S."/>
        </authorList>
    </citation>
    <scope>NUCLEOTIDE SEQUENCE [LARGE SCALE MRNA] OF 16-739 (ISOFORM 1)</scope>
    <source>
        <tissue>Placenta</tissue>
    </source>
</reference>
<reference key="9">
    <citation type="submission" date="1999-12" db="EMBL/GenBank/DDBJ databases">
        <title>A novel gene expressed in human bone marrow.</title>
        <authorList>
            <person name="Zhao M."/>
            <person name="Gu J."/>
            <person name="Li N."/>
            <person name="Peng Y."/>
            <person name="Han Z."/>
            <person name="Chen Z."/>
        </authorList>
    </citation>
    <scope>NUCLEOTIDE SEQUENCE [LARGE SCALE MRNA] OF 570-782 (ISOFORM 1)</scope>
    <source>
        <tissue>Bone marrow</tissue>
    </source>
</reference>
<reference key="10">
    <citation type="journal article" date="2005" name="Biochem. Biophys. Res. Commun.">
        <title>Identification and distribution of endoplasmic reticulum iPLA2.</title>
        <authorList>
            <person name="Kinsey G.R."/>
            <person name="Cummings B.S."/>
            <person name="Beckett C.S."/>
            <person name="Saavedra G."/>
            <person name="Zhang W."/>
            <person name="McHowat J."/>
            <person name="Schnellmann R.G."/>
        </authorList>
    </citation>
    <scope>TISSUE SPECIFICITY</scope>
</reference>
<reference key="11">
    <citation type="journal article" date="2005" name="J. Biol. Chem.">
        <title>Group VIB Ca2+-independent phospholipase A2gamma promotes cellular membrane hydrolysis and prostaglandin production in a manner distinct from other intracellular phospholipases A2.</title>
        <authorList>
            <person name="Murakami M."/>
            <person name="Masuda S."/>
            <person name="Ueda-Semmyo K."/>
            <person name="Yoda E."/>
            <person name="Kuwata H."/>
            <person name="Takanezawa Y."/>
            <person name="Aoki J."/>
            <person name="Arai H."/>
            <person name="Sumimoto H."/>
            <person name="Ishikawa Y."/>
            <person name="Ishii T."/>
            <person name="Nakatani Y."/>
            <person name="Kudo I."/>
        </authorList>
    </citation>
    <scope>FUNCTION</scope>
    <scope>CATALYTIC ACTIVITY</scope>
    <scope>SUBCELLULAR LOCATION</scope>
    <scope>TISSUE SPECIFICITY</scope>
</reference>
<reference key="12">
    <citation type="journal article" date="2005" name="J. Biol. Chem.">
        <title>The highly selective production of 2-arachidonoyl lysophosphatidylcholine catalyzed by purified calcium-independent phospholipase A2gamma: identification of a novel enzymatic mediator for the generation of a key branch point intermediate in eicosanoid signaling.</title>
        <authorList>
            <person name="Yan W."/>
            <person name="Jenkins C.M."/>
            <person name="Han X."/>
            <person name="Mancuso D.J."/>
            <person name="Sims H.F."/>
            <person name="Yang K."/>
            <person name="Gross R.W."/>
        </authorList>
    </citation>
    <scope>FUNCTION</scope>
    <scope>CATALYTIC ACTIVITY</scope>
    <scope>ACTIVITY REGULATION</scope>
    <scope>PATHWAY</scope>
    <scope>TISSUE SPECIFICITY</scope>
</reference>
<reference key="13">
    <citation type="journal article" date="2007" name="J. Biol. Chem.">
        <title>Dramatic accumulation of triglycerides and precipitation of cardiac hemodynamic dysfunction during brief caloric restriction in transgenic myocardium expressing human calcium-independent phospholipase A2gamma.</title>
        <authorList>
            <person name="Mancuso D.J."/>
            <person name="Han X."/>
            <person name="Jenkins C.M."/>
            <person name="Lehman J.J."/>
            <person name="Sambandam N."/>
            <person name="Sims H.F."/>
            <person name="Yang J."/>
            <person name="Yan W."/>
            <person name="Yang K."/>
            <person name="Green K."/>
            <person name="Abendschein D.R."/>
            <person name="Saffitz J.E."/>
            <person name="Gross R.W."/>
        </authorList>
    </citation>
    <scope>FUNCTION</scope>
    <scope>CATALYTIC ACTIVITY</scope>
    <scope>SUBCELLULAR LOCATION</scope>
</reference>
<reference key="14">
    <citation type="journal article" date="2008" name="Am. J. Physiol.">
        <title>Role of calcium-independent phospholipase A2 in complement-mediated glomerular epithelial cell injury.</title>
        <authorList>
            <person name="Cohen D."/>
            <person name="Papillon J."/>
            <person name="Aoudjit L."/>
            <person name="Li H."/>
            <person name="Cybulsky A.V."/>
            <person name="Takano T."/>
        </authorList>
    </citation>
    <scope>FUNCTION</scope>
    <scope>CATALYTIC ACTIVITY</scope>
    <scope>ACTIVITY REGULATION</scope>
</reference>
<reference key="15">
    <citation type="journal article" date="2015" name="Hum. Mutat.">
        <title>Loss of function variants in human PNPLA8 encoding calcium-independent phospholipase A2 gamma recapitulate the mitochondriopathy of the homologous null mouse.</title>
        <authorList>
            <person name="Saunders C.J."/>
            <person name="Moon S.H."/>
            <person name="Liu X."/>
            <person name="Thiffault I."/>
            <person name="Coffman K."/>
            <person name="LePichon J.B."/>
            <person name="Taboada E."/>
            <person name="Smith L.D."/>
            <person name="Farrow E.G."/>
            <person name="Miller N."/>
            <person name="Gibson M."/>
            <person name="Patterson M."/>
            <person name="Kingsmore S.F."/>
            <person name="Gross R.W."/>
        </authorList>
    </citation>
    <scope>INVOLVEMENT IN MMLA</scope>
</reference>
<reference key="16">
    <citation type="journal article" date="2017" name="J. Biol. Chem.">
        <title>The phospholipase iPLA2gamma is a major mediator releasing oxidized aliphatic chains from cardiolipin, integrating mitochondrial bioenergetics and signaling.</title>
        <authorList>
            <person name="Liu G.Y."/>
            <person name="Moon S.H."/>
            <person name="Jenkins C.M."/>
            <person name="Li M."/>
            <person name="Sims H.F."/>
            <person name="Guan S."/>
            <person name="Gross R.W."/>
        </authorList>
    </citation>
    <scope>FUNCTION</scope>
    <scope>CATALYTIC ACTIVITY</scope>
    <scope>ACTIVITY REGULATION</scope>
</reference>
<sequence length="782" mass="88477">MSINLTVDIYIYLLSNARSVCGKQRSKQLYFLFSPKHYWRISHISLQRGFHTNIIRCKWTKSEAHSCSKHCYSPSNHGLHIGILKLSTSAPKGLTKVNICMSRIKSTLNSVSKAVFGNQNEMISRLAQFKPSSQILRKVSDSGWLKQKNIKQAIKSLKKYSDKSAEKSPFPEEKSHIIDKEEDIGKRSLFHYTSSITTKFGDSFYFLSNHINSYFKRKEKMSQQKENEHFRDKSELEDKKVEEGKLRSPDPGILAYKPGSESVHTVDKPTSPSAIPDVLQVSTKQSIANFLSRPTEGVQALVGGYIGGLVPKLKYDSKSQSEEQEEPAKTDQAVSKDRNAEEKKRLSLQREKIIARVSIDNRTRALVQALRRTTDPKLCITRVEELTFHLLEFPEGKGVAVKERIIPYLLRLRQIKDETLQAAVREILALIGYVDPVKGRGIRILSIDGGGTRGVVALQTLRKLVELTQKPVHQLFDYICGVSTGAILAFMLGLFHMPLDECEELYRKLGSDVFSQNVIVGTVKMSWSHAFYDSQTWENILKDRMGSALMIETARNPTCPKVAAVSTIVNRGITPKAFVFRNYGHFPGINSHYLGGCQYKMWQAIRASSAAPGYFAEYALGNDLHQDGGLLLNNPSALAMHECKCLWPDVPLECIVSLGTGRYESDVRNTVTYTSLKTKLSNVINSATDTEEVHIMLDGLLPPDTYFRFNPVMCENIPLDESRNEKLDQLQLEGLKYIERNEQKMKKVAKILSQEKTTLQKINDWIKLKTDMYEGLPFFSKL</sequence>
<name>PLPL8_HUMAN</name>
<keyword id="KW-0025">Alternative splicing</keyword>
<keyword id="KW-0256">Endoplasmic reticulum</keyword>
<keyword id="KW-0325">Glycoprotein</keyword>
<keyword id="KW-0378">Hydrolase</keyword>
<keyword id="KW-0442">Lipid degradation</keyword>
<keyword id="KW-0443">Lipid metabolism</keyword>
<keyword id="KW-0472">Membrane</keyword>
<keyword id="KW-0496">Mitochondrion</keyword>
<keyword id="KW-0576">Peroxisome</keyword>
<keyword id="KW-1267">Proteomics identification</keyword>
<keyword id="KW-1185">Reference proteome</keyword>
<keyword id="KW-0812">Transmembrane</keyword>
<keyword id="KW-1133">Transmembrane helix</keyword>
<proteinExistence type="evidence at protein level"/>
<dbReference type="EC" id="3.1.1.-" evidence="6 7 9 10 11 12"/>
<dbReference type="EC" id="3.1.1.5" evidence="10"/>
<dbReference type="EMBL" id="AB041261">
    <property type="protein sequence ID" value="BAA94997.1"/>
    <property type="molecule type" value="mRNA"/>
</dbReference>
<dbReference type="EMBL" id="AF263613">
    <property type="protein sequence ID" value="AAF75269.1"/>
    <property type="molecule type" value="mRNA"/>
</dbReference>
<dbReference type="EMBL" id="AF263947">
    <property type="protein sequence ID" value="AAF81246.1"/>
    <property type="molecule type" value="mRNA"/>
</dbReference>
<dbReference type="EMBL" id="AL834147">
    <property type="protein sequence ID" value="CAD38859.1"/>
    <property type="molecule type" value="mRNA"/>
</dbReference>
<dbReference type="EMBL" id="BX647865">
    <property type="status" value="NOT_ANNOTATED_CDS"/>
    <property type="molecule type" value="mRNA"/>
</dbReference>
<dbReference type="EMBL" id="AC005058">
    <property type="protein sequence ID" value="AAD08847.1"/>
    <property type="molecule type" value="Genomic_DNA"/>
</dbReference>
<dbReference type="EMBL" id="CH236947">
    <property type="protein sequence ID" value="EAL24384.1"/>
    <property type="status" value="ALT_SEQ"/>
    <property type="molecule type" value="Genomic_DNA"/>
</dbReference>
<dbReference type="EMBL" id="CH236947">
    <property type="protein sequence ID" value="EAL24385.1"/>
    <property type="molecule type" value="Genomic_DNA"/>
</dbReference>
<dbReference type="EMBL" id="CH471070">
    <property type="protein sequence ID" value="EAW83433.1"/>
    <property type="molecule type" value="Genomic_DNA"/>
</dbReference>
<dbReference type="EMBL" id="BC032999">
    <property type="protein sequence ID" value="AAH32999.1"/>
    <property type="molecule type" value="mRNA"/>
</dbReference>
<dbReference type="EMBL" id="AK002115">
    <property type="protein sequence ID" value="BAA92090.1"/>
    <property type="status" value="ALT_INIT"/>
    <property type="molecule type" value="mRNA"/>
</dbReference>
<dbReference type="EMBL" id="AK024335">
    <property type="protein sequence ID" value="BAB14890.1"/>
    <property type="molecule type" value="mRNA"/>
</dbReference>
<dbReference type="EMBL" id="AF217519">
    <property type="protein sequence ID" value="AAF67630.1"/>
    <property type="status" value="ALT_INIT"/>
    <property type="molecule type" value="mRNA"/>
</dbReference>
<dbReference type="CCDS" id="CCDS34733.1">
    <molecule id="Q9NP80-1"/>
</dbReference>
<dbReference type="CCDS" id="CCDS59075.1">
    <molecule id="Q9NP80-3"/>
</dbReference>
<dbReference type="CCDS" id="CCDS59508.1">
    <molecule id="Q9NP80-2"/>
</dbReference>
<dbReference type="PIR" id="JC7284">
    <property type="entry name" value="JC7284"/>
</dbReference>
<dbReference type="RefSeq" id="NP_001242936.1">
    <molecule id="Q9NP80-1"/>
    <property type="nucleotide sequence ID" value="NM_001256007.3"/>
</dbReference>
<dbReference type="RefSeq" id="NP_001242937.1">
    <molecule id="Q9NP80-1"/>
    <property type="nucleotide sequence ID" value="NM_001256008.3"/>
</dbReference>
<dbReference type="RefSeq" id="NP_001242938.1">
    <molecule id="Q9NP80-2"/>
    <property type="nucleotide sequence ID" value="NM_001256009.3"/>
</dbReference>
<dbReference type="RefSeq" id="NP_001242939.1">
    <molecule id="Q9NP80-3"/>
    <property type="nucleotide sequence ID" value="NM_001256010.3"/>
</dbReference>
<dbReference type="RefSeq" id="NP_001242940.1">
    <molecule id="Q9NP80-3"/>
    <property type="nucleotide sequence ID" value="NM_001256011.3"/>
</dbReference>
<dbReference type="RefSeq" id="NP_056538.1">
    <molecule id="Q9NP80-1"/>
    <property type="nucleotide sequence ID" value="NM_015723.5"/>
</dbReference>
<dbReference type="RefSeq" id="XP_005250453.1">
    <molecule id="Q9NP80-2"/>
    <property type="nucleotide sequence ID" value="XM_005250396.6"/>
</dbReference>
<dbReference type="RefSeq" id="XP_011514576.1">
    <property type="nucleotide sequence ID" value="XM_011516274.2"/>
</dbReference>
<dbReference type="RefSeq" id="XP_054214292.1">
    <molecule id="Q9NP80-2"/>
    <property type="nucleotide sequence ID" value="XM_054358317.1"/>
</dbReference>
<dbReference type="SMR" id="Q9NP80"/>
<dbReference type="BioGRID" id="119111">
    <property type="interactions" value="62"/>
</dbReference>
<dbReference type="FunCoup" id="Q9NP80">
    <property type="interactions" value="1990"/>
</dbReference>
<dbReference type="IntAct" id="Q9NP80">
    <property type="interactions" value="14"/>
</dbReference>
<dbReference type="STRING" id="9606.ENSP00000257694"/>
<dbReference type="ChEMBL" id="CHEMBL2189126"/>
<dbReference type="SwissLipids" id="SLP:000000564"/>
<dbReference type="GlyCosmos" id="Q9NP80">
    <property type="glycosylation" value="2 sites, No reported glycans"/>
</dbReference>
<dbReference type="GlyGen" id="Q9NP80">
    <property type="glycosylation" value="3 sites, 1 O-linked glycan (1 site)"/>
</dbReference>
<dbReference type="iPTMnet" id="Q9NP80"/>
<dbReference type="PhosphoSitePlus" id="Q9NP80"/>
<dbReference type="SwissPalm" id="Q9NP80"/>
<dbReference type="BioMuta" id="PNPLA8"/>
<dbReference type="DMDM" id="74734299"/>
<dbReference type="jPOST" id="Q9NP80"/>
<dbReference type="MassIVE" id="Q9NP80"/>
<dbReference type="PaxDb" id="9606-ENSP00000410804"/>
<dbReference type="PeptideAtlas" id="Q9NP80"/>
<dbReference type="ProteomicsDB" id="12404"/>
<dbReference type="ProteomicsDB" id="81923">
    <molecule id="Q9NP80-1"/>
</dbReference>
<dbReference type="ProteomicsDB" id="81924">
    <molecule id="Q9NP80-2"/>
</dbReference>
<dbReference type="Pumba" id="Q9NP80"/>
<dbReference type="Antibodypedia" id="17333">
    <property type="antibodies" value="164 antibodies from 23 providers"/>
</dbReference>
<dbReference type="DNASU" id="50640"/>
<dbReference type="Ensembl" id="ENST00000257694.13">
    <molecule id="Q9NP80-1"/>
    <property type="protein sequence ID" value="ENSP00000257694.8"/>
    <property type="gene ID" value="ENSG00000135241.17"/>
</dbReference>
<dbReference type="Ensembl" id="ENST00000422087.5">
    <molecule id="Q9NP80-1"/>
    <property type="protein sequence ID" value="ENSP00000410804.1"/>
    <property type="gene ID" value="ENSG00000135241.17"/>
</dbReference>
<dbReference type="Ensembl" id="ENST00000426128.6">
    <molecule id="Q9NP80-2"/>
    <property type="protein sequence ID" value="ENSP00000394988.2"/>
    <property type="gene ID" value="ENSG00000135241.17"/>
</dbReference>
<dbReference type="Ensembl" id="ENST00000436062.5">
    <molecule id="Q9NP80-1"/>
    <property type="protein sequence ID" value="ENSP00000406779.1"/>
    <property type="gene ID" value="ENSG00000135241.17"/>
</dbReference>
<dbReference type="Ensembl" id="ENST00000453144.5">
    <molecule id="Q9NP80-3"/>
    <property type="protein sequence ID" value="ENSP00000387789.1"/>
    <property type="gene ID" value="ENSG00000135241.17"/>
</dbReference>
<dbReference type="GeneID" id="50640"/>
<dbReference type="KEGG" id="hsa:50640"/>
<dbReference type="MANE-Select" id="ENST00000257694.13">
    <property type="protein sequence ID" value="ENSP00000257694.8"/>
    <property type="RefSeq nucleotide sequence ID" value="NM_001256007.3"/>
    <property type="RefSeq protein sequence ID" value="NP_001242936.1"/>
</dbReference>
<dbReference type="UCSC" id="uc003vff.3">
    <molecule id="Q9NP80-1"/>
    <property type="organism name" value="human"/>
</dbReference>
<dbReference type="AGR" id="HGNC:28900"/>
<dbReference type="CTD" id="50640"/>
<dbReference type="DisGeNET" id="50640"/>
<dbReference type="GeneCards" id="PNPLA8"/>
<dbReference type="HGNC" id="HGNC:28900">
    <property type="gene designation" value="PNPLA8"/>
</dbReference>
<dbReference type="HPA" id="ENSG00000135241">
    <property type="expression patterns" value="Low tissue specificity"/>
</dbReference>
<dbReference type="MalaCards" id="PNPLA8"/>
<dbReference type="MIM" id="251950">
    <property type="type" value="phenotype"/>
</dbReference>
<dbReference type="MIM" id="612123">
    <property type="type" value="gene"/>
</dbReference>
<dbReference type="neXtProt" id="NX_Q9NP80"/>
<dbReference type="OpenTargets" id="ENSG00000135241"/>
<dbReference type="PharmGKB" id="PA145148236"/>
<dbReference type="VEuPathDB" id="HostDB:ENSG00000135241"/>
<dbReference type="eggNOG" id="KOG4231">
    <property type="taxonomic scope" value="Eukaryota"/>
</dbReference>
<dbReference type="GeneTree" id="ENSGT00940000154738"/>
<dbReference type="InParanoid" id="Q9NP80"/>
<dbReference type="OMA" id="HMSRIKN"/>
<dbReference type="OrthoDB" id="630895at2759"/>
<dbReference type="PAN-GO" id="Q9NP80">
    <property type="GO annotations" value="3 GO annotations based on evolutionary models"/>
</dbReference>
<dbReference type="PhylomeDB" id="Q9NP80"/>
<dbReference type="TreeFam" id="TF319230"/>
<dbReference type="PathwayCommons" id="Q9NP80"/>
<dbReference type="Reactome" id="R-HSA-1482788">
    <property type="pathway name" value="Acyl chain remodelling of PC"/>
</dbReference>
<dbReference type="Reactome" id="R-HSA-1482839">
    <property type="pathway name" value="Acyl chain remodelling of PE"/>
</dbReference>
<dbReference type="SignaLink" id="Q9NP80"/>
<dbReference type="SIGNOR" id="Q9NP80"/>
<dbReference type="BioGRID-ORCS" id="50640">
    <property type="hits" value="32 hits in 1154 CRISPR screens"/>
</dbReference>
<dbReference type="ChiTaRS" id="PNPLA8">
    <property type="organism name" value="human"/>
</dbReference>
<dbReference type="GeneWiki" id="PNPLA8"/>
<dbReference type="GenomeRNAi" id="50640"/>
<dbReference type="Pharos" id="Q9NP80">
    <property type="development level" value="Tbio"/>
</dbReference>
<dbReference type="PRO" id="PR:Q9NP80"/>
<dbReference type="Proteomes" id="UP000005640">
    <property type="component" value="Chromosome 7"/>
</dbReference>
<dbReference type="RNAct" id="Q9NP80">
    <property type="molecule type" value="protein"/>
</dbReference>
<dbReference type="Bgee" id="ENSG00000135241">
    <property type="expression patterns" value="Expressed in endothelial cell and 193 other cell types or tissues"/>
</dbReference>
<dbReference type="ExpressionAtlas" id="Q9NP80">
    <property type="expression patterns" value="baseline and differential"/>
</dbReference>
<dbReference type="GO" id="GO:0005789">
    <property type="term" value="C:endoplasmic reticulum membrane"/>
    <property type="evidence" value="ECO:0000304"/>
    <property type="project" value="Reactome"/>
</dbReference>
<dbReference type="GO" id="GO:0016020">
    <property type="term" value="C:membrane"/>
    <property type="evidence" value="ECO:0000314"/>
    <property type="project" value="UniProtKB"/>
</dbReference>
<dbReference type="GO" id="GO:0031966">
    <property type="term" value="C:mitochondrial membrane"/>
    <property type="evidence" value="ECO:0007669"/>
    <property type="project" value="UniProtKB-SubCell"/>
</dbReference>
<dbReference type="GO" id="GO:0005739">
    <property type="term" value="C:mitochondrion"/>
    <property type="evidence" value="ECO:0006056"/>
    <property type="project" value="FlyBase"/>
</dbReference>
<dbReference type="GO" id="GO:0005778">
    <property type="term" value="C:peroxisomal membrane"/>
    <property type="evidence" value="ECO:0000314"/>
    <property type="project" value="UniProtKB"/>
</dbReference>
<dbReference type="GO" id="GO:0005777">
    <property type="term" value="C:peroxisome"/>
    <property type="evidence" value="ECO:0000314"/>
    <property type="project" value="UniProtKB"/>
</dbReference>
<dbReference type="GO" id="GO:0005524">
    <property type="term" value="F:ATP binding"/>
    <property type="evidence" value="ECO:0000303"/>
    <property type="project" value="UniProtKB"/>
</dbReference>
<dbReference type="GO" id="GO:0047499">
    <property type="term" value="F:calcium-independent phospholipase A2 activity"/>
    <property type="evidence" value="ECO:0000314"/>
    <property type="project" value="UniProtKB"/>
</dbReference>
<dbReference type="GO" id="GO:0004622">
    <property type="term" value="F:lysophospholipase activity"/>
    <property type="evidence" value="ECO:0007669"/>
    <property type="project" value="UniProtKB-EC"/>
</dbReference>
<dbReference type="GO" id="GO:0008970">
    <property type="term" value="F:phospholipase A1 activity"/>
    <property type="evidence" value="ECO:0007669"/>
    <property type="project" value="RHEA"/>
</dbReference>
<dbReference type="GO" id="GO:0019369">
    <property type="term" value="P:arachidonate metabolic process"/>
    <property type="evidence" value="ECO:0000314"/>
    <property type="project" value="UniProtKB"/>
</dbReference>
<dbReference type="GO" id="GO:0050482">
    <property type="term" value="P:arachidonate secretion"/>
    <property type="evidence" value="ECO:0000314"/>
    <property type="project" value="UniProtKB"/>
</dbReference>
<dbReference type="GO" id="GO:0032048">
    <property type="term" value="P:cardiolipin metabolic process"/>
    <property type="evidence" value="ECO:0000314"/>
    <property type="project" value="UniProtKB"/>
</dbReference>
<dbReference type="GO" id="GO:0006631">
    <property type="term" value="P:fatty acid metabolic process"/>
    <property type="evidence" value="ECO:0000314"/>
    <property type="project" value="UniProtKB"/>
</dbReference>
<dbReference type="GO" id="GO:0035556">
    <property type="term" value="P:intracellular signal transduction"/>
    <property type="evidence" value="ECO:0000314"/>
    <property type="project" value="UniProtKB"/>
</dbReference>
<dbReference type="GO" id="GO:0043651">
    <property type="term" value="P:linoleic acid metabolic process"/>
    <property type="evidence" value="ECO:0000314"/>
    <property type="project" value="UniProtKB"/>
</dbReference>
<dbReference type="GO" id="GO:0055088">
    <property type="term" value="P:lipid homeostasis"/>
    <property type="evidence" value="ECO:0000315"/>
    <property type="project" value="UniProtKB"/>
</dbReference>
<dbReference type="GO" id="GO:0034638">
    <property type="term" value="P:phosphatidylcholine catabolic process"/>
    <property type="evidence" value="ECO:0000314"/>
    <property type="project" value="UniProtKB"/>
</dbReference>
<dbReference type="GO" id="GO:0046338">
    <property type="term" value="P:phosphatidylethanolamine catabolic process"/>
    <property type="evidence" value="ECO:0000314"/>
    <property type="project" value="UniProtKB"/>
</dbReference>
<dbReference type="GO" id="GO:0001516">
    <property type="term" value="P:prostaglandin biosynthetic process"/>
    <property type="evidence" value="ECO:0000314"/>
    <property type="project" value="UniProtKB"/>
</dbReference>
<dbReference type="GO" id="GO:1900407">
    <property type="term" value="P:regulation of cellular response to oxidative stress"/>
    <property type="evidence" value="ECO:0007669"/>
    <property type="project" value="Ensembl"/>
</dbReference>
<dbReference type="GO" id="GO:0070328">
    <property type="term" value="P:triglyceride homeostasis"/>
    <property type="evidence" value="ECO:0000315"/>
    <property type="project" value="UniProtKB"/>
</dbReference>
<dbReference type="CDD" id="cd07211">
    <property type="entry name" value="Pat_PNPLA8"/>
    <property type="match status" value="1"/>
</dbReference>
<dbReference type="FunFam" id="3.40.1090.10:FF:000012">
    <property type="entry name" value="calcium-independent phospholipase A2-gamma isoform X1"/>
    <property type="match status" value="1"/>
</dbReference>
<dbReference type="Gene3D" id="3.40.1090.10">
    <property type="entry name" value="Cytosolic phospholipase A2 catalytic domain"/>
    <property type="match status" value="1"/>
</dbReference>
<dbReference type="InterPro" id="IPR016035">
    <property type="entry name" value="Acyl_Trfase/lysoPLipase"/>
</dbReference>
<dbReference type="InterPro" id="IPR045217">
    <property type="entry name" value="PNPLA8-like"/>
</dbReference>
<dbReference type="InterPro" id="IPR002641">
    <property type="entry name" value="PNPLA_dom"/>
</dbReference>
<dbReference type="PANTHER" id="PTHR24185">
    <property type="entry name" value="CALCIUM-INDEPENDENT PHOSPHOLIPASE A2-GAMMA"/>
    <property type="match status" value="1"/>
</dbReference>
<dbReference type="PANTHER" id="PTHR24185:SF1">
    <property type="entry name" value="CALCIUM-INDEPENDENT PHOSPHOLIPASE A2-GAMMA"/>
    <property type="match status" value="1"/>
</dbReference>
<dbReference type="Pfam" id="PF01734">
    <property type="entry name" value="Patatin"/>
    <property type="match status" value="1"/>
</dbReference>
<dbReference type="SUPFAM" id="SSF52151">
    <property type="entry name" value="FabD/lysophospholipase-like"/>
    <property type="match status" value="1"/>
</dbReference>
<dbReference type="PROSITE" id="PS51635">
    <property type="entry name" value="PNPLA"/>
    <property type="match status" value="1"/>
</dbReference>
<evidence type="ECO:0000250" key="1">
    <source>
        <dbReference type="UniProtKB" id="Q5XTS1"/>
    </source>
</evidence>
<evidence type="ECO:0000250" key="2">
    <source>
        <dbReference type="UniProtKB" id="Q8K1N1"/>
    </source>
</evidence>
<evidence type="ECO:0000255" key="3"/>
<evidence type="ECO:0000255" key="4">
    <source>
        <dbReference type="PROSITE-ProRule" id="PRU01161"/>
    </source>
</evidence>
<evidence type="ECO:0000256" key="5">
    <source>
        <dbReference type="SAM" id="MobiDB-lite"/>
    </source>
</evidence>
<evidence type="ECO:0000269" key="6">
    <source>
    </source>
</evidence>
<evidence type="ECO:0000269" key="7">
    <source>
    </source>
</evidence>
<evidence type="ECO:0000269" key="8">
    <source>
    </source>
</evidence>
<evidence type="ECO:0000269" key="9">
    <source>
    </source>
</evidence>
<evidence type="ECO:0000269" key="10">
    <source>
    </source>
</evidence>
<evidence type="ECO:0000269" key="11">
    <source>
    </source>
</evidence>
<evidence type="ECO:0000269" key="12">
    <source>
    </source>
</evidence>
<evidence type="ECO:0000269" key="13">
    <source>
    </source>
</evidence>
<evidence type="ECO:0000269" key="14">
    <source>
    </source>
</evidence>
<evidence type="ECO:0000303" key="15">
    <source>
    </source>
</evidence>
<evidence type="ECO:0000303" key="16">
    <source>
    </source>
</evidence>
<evidence type="ECO:0000305" key="17"/>
<evidence type="ECO:0000305" key="18">
    <source>
    </source>
</evidence>
<evidence type="ECO:0000305" key="19">
    <source>
    </source>
</evidence>
<evidence type="ECO:0000305" key="20">
    <source>
    </source>
</evidence>
<evidence type="ECO:0000305" key="21">
    <source>
    </source>
</evidence>
<evidence type="ECO:0000305" key="22">
    <source>
    </source>
</evidence>
<evidence type="ECO:0000305" key="23">
    <source>
    </source>
</evidence>
<evidence type="ECO:0000305" key="24">
    <source>
    </source>
</evidence>
<evidence type="ECO:0000312" key="25">
    <source>
        <dbReference type="HGNC" id="HGNC:28900"/>
    </source>
</evidence>
<gene>
    <name evidence="25" type="primary">PNPLA8</name>
    <name type="synonym">IPLA22</name>
    <name type="synonym">IPLA2G</name>
    <name type="ORF">BM-043</name>
</gene>